<organism>
    <name type="scientific">Bos taurus</name>
    <name type="common">Bovine</name>
    <dbReference type="NCBI Taxonomy" id="9913"/>
    <lineage>
        <taxon>Eukaryota</taxon>
        <taxon>Metazoa</taxon>
        <taxon>Chordata</taxon>
        <taxon>Craniata</taxon>
        <taxon>Vertebrata</taxon>
        <taxon>Euteleostomi</taxon>
        <taxon>Mammalia</taxon>
        <taxon>Eutheria</taxon>
        <taxon>Laurasiatheria</taxon>
        <taxon>Artiodactyla</taxon>
        <taxon>Ruminantia</taxon>
        <taxon>Pecora</taxon>
        <taxon>Bovidae</taxon>
        <taxon>Bovinae</taxon>
        <taxon>Bos</taxon>
    </lineage>
</organism>
<dbReference type="EC" id="2.4.2.7" evidence="2"/>
<dbReference type="EMBL" id="AY911367">
    <property type="protein sequence ID" value="AAW82131.1"/>
    <property type="molecule type" value="mRNA"/>
</dbReference>
<dbReference type="EMBL" id="BC102283">
    <property type="protein sequence ID" value="AAI02284.1"/>
    <property type="molecule type" value="mRNA"/>
</dbReference>
<dbReference type="RefSeq" id="NP_001020505.1">
    <property type="nucleotide sequence ID" value="NM_001025334.2"/>
</dbReference>
<dbReference type="SMR" id="Q56JW4"/>
<dbReference type="FunCoup" id="Q56JW4">
    <property type="interactions" value="1114"/>
</dbReference>
<dbReference type="STRING" id="9913.ENSBTAP00000000841"/>
<dbReference type="PaxDb" id="9913-ENSBTAP00000000841"/>
<dbReference type="PeptideAtlas" id="Q56JW4"/>
<dbReference type="GeneID" id="519017"/>
<dbReference type="KEGG" id="bta:519017"/>
<dbReference type="CTD" id="353"/>
<dbReference type="eggNOG" id="KOG1712">
    <property type="taxonomic scope" value="Eukaryota"/>
</dbReference>
<dbReference type="HOGENOM" id="CLU_063339_3_2_1"/>
<dbReference type="InParanoid" id="Q56JW4"/>
<dbReference type="OrthoDB" id="363185at2759"/>
<dbReference type="TreeFam" id="TF300227"/>
<dbReference type="UniPathway" id="UPA00588">
    <property type="reaction ID" value="UER00646"/>
</dbReference>
<dbReference type="Proteomes" id="UP000009136">
    <property type="component" value="Unplaced"/>
</dbReference>
<dbReference type="GO" id="GO:0005737">
    <property type="term" value="C:cytoplasm"/>
    <property type="evidence" value="ECO:0000318"/>
    <property type="project" value="GO_Central"/>
</dbReference>
<dbReference type="GO" id="GO:0002055">
    <property type="term" value="F:adenine binding"/>
    <property type="evidence" value="ECO:0000318"/>
    <property type="project" value="GO_Central"/>
</dbReference>
<dbReference type="GO" id="GO:0003999">
    <property type="term" value="F:adenine phosphoribosyltransferase activity"/>
    <property type="evidence" value="ECO:0000250"/>
    <property type="project" value="UniProtKB"/>
</dbReference>
<dbReference type="GO" id="GO:0016208">
    <property type="term" value="F:AMP binding"/>
    <property type="evidence" value="ECO:0000318"/>
    <property type="project" value="GO_Central"/>
</dbReference>
<dbReference type="GO" id="GO:0006168">
    <property type="term" value="P:adenine salvage"/>
    <property type="evidence" value="ECO:0000318"/>
    <property type="project" value="GO_Central"/>
</dbReference>
<dbReference type="GO" id="GO:0044209">
    <property type="term" value="P:AMP salvage"/>
    <property type="evidence" value="ECO:0000318"/>
    <property type="project" value="GO_Central"/>
</dbReference>
<dbReference type="GO" id="GO:0006166">
    <property type="term" value="P:purine ribonucleoside salvage"/>
    <property type="evidence" value="ECO:0007669"/>
    <property type="project" value="UniProtKB-KW"/>
</dbReference>
<dbReference type="CDD" id="cd06223">
    <property type="entry name" value="PRTases_typeI"/>
    <property type="match status" value="1"/>
</dbReference>
<dbReference type="FunFam" id="3.40.50.2020:FF:000123">
    <property type="entry name" value="Adenine phosphoribosyltransferase"/>
    <property type="match status" value="1"/>
</dbReference>
<dbReference type="Gene3D" id="3.40.50.2020">
    <property type="match status" value="1"/>
</dbReference>
<dbReference type="HAMAP" id="MF_00004">
    <property type="entry name" value="Aden_phosphoribosyltr"/>
    <property type="match status" value="1"/>
</dbReference>
<dbReference type="InterPro" id="IPR005764">
    <property type="entry name" value="Ade_phspho_trans"/>
</dbReference>
<dbReference type="InterPro" id="IPR000836">
    <property type="entry name" value="PRibTrfase_dom"/>
</dbReference>
<dbReference type="InterPro" id="IPR029057">
    <property type="entry name" value="PRTase-like"/>
</dbReference>
<dbReference type="InterPro" id="IPR050054">
    <property type="entry name" value="UPRTase/APRTase"/>
</dbReference>
<dbReference type="NCBIfam" id="TIGR01090">
    <property type="entry name" value="apt"/>
    <property type="match status" value="1"/>
</dbReference>
<dbReference type="NCBIfam" id="NF002634">
    <property type="entry name" value="PRK02304.1-3"/>
    <property type="match status" value="1"/>
</dbReference>
<dbReference type="NCBIfam" id="NF002636">
    <property type="entry name" value="PRK02304.1-5"/>
    <property type="match status" value="1"/>
</dbReference>
<dbReference type="PANTHER" id="PTHR32315">
    <property type="entry name" value="ADENINE PHOSPHORIBOSYLTRANSFERASE"/>
    <property type="match status" value="1"/>
</dbReference>
<dbReference type="PANTHER" id="PTHR32315:SF3">
    <property type="entry name" value="ADENINE PHOSPHORIBOSYLTRANSFERASE"/>
    <property type="match status" value="1"/>
</dbReference>
<dbReference type="Pfam" id="PF00156">
    <property type="entry name" value="Pribosyltran"/>
    <property type="match status" value="1"/>
</dbReference>
<dbReference type="SUPFAM" id="SSF53271">
    <property type="entry name" value="PRTase-like"/>
    <property type="match status" value="1"/>
</dbReference>
<dbReference type="PROSITE" id="PS00103">
    <property type="entry name" value="PUR_PYR_PR_TRANSFER"/>
    <property type="match status" value="1"/>
</dbReference>
<feature type="initiator methionine" description="Removed" evidence="2">
    <location>
        <position position="1"/>
    </location>
</feature>
<feature type="chain" id="PRO_0000240344" description="Adenine phosphoribosyltransferase">
    <location>
        <begin position="2"/>
        <end position="180"/>
    </location>
</feature>
<feature type="modified residue" description="N-acetylalanine" evidence="2">
    <location>
        <position position="2"/>
    </location>
</feature>
<feature type="modified residue" description="Phosphoserine" evidence="2">
    <location>
        <position position="15"/>
    </location>
</feature>
<feature type="modified residue" description="Phosphoserine" evidence="2">
    <location>
        <position position="30"/>
    </location>
</feature>
<feature type="modified residue" description="Phosphotyrosine" evidence="2">
    <location>
        <position position="60"/>
    </location>
</feature>
<feature type="modified residue" description="Phosphoserine" evidence="2">
    <location>
        <position position="66"/>
    </location>
</feature>
<feature type="modified residue" description="Phosphothreonine" evidence="2">
    <location>
        <position position="135"/>
    </location>
</feature>
<sequence length="180" mass="19537">MADPELQLVARRIRSFPNFPIPGVLFRDISPVLKDPTSFRASINLLANHLKKAHGGRIDYIAGLDSRGFLFGPSLAQELGLGCILIRKRGKLPGPTVCASYALEYGKGELEIQRDALEPGQKVVVVDDLLATGGTMCAACELLGQLRAEVLECVSLVELTSLKGREKLGAVPFFSLLQYE</sequence>
<gene>
    <name evidence="2" type="primary">APRT</name>
</gene>
<accession>Q56JW4</accession>
<keyword id="KW-0007">Acetylation</keyword>
<keyword id="KW-0963">Cytoplasm</keyword>
<keyword id="KW-0328">Glycosyltransferase</keyword>
<keyword id="KW-0597">Phosphoprotein</keyword>
<keyword id="KW-0660">Purine salvage</keyword>
<keyword id="KW-1185">Reference proteome</keyword>
<keyword id="KW-0808">Transferase</keyword>
<name>APT_BOVIN</name>
<evidence type="ECO:0000250" key="1"/>
<evidence type="ECO:0000250" key="2">
    <source>
        <dbReference type="UniProtKB" id="P07741"/>
    </source>
</evidence>
<evidence type="ECO:0000305" key="3"/>
<protein>
    <recommendedName>
        <fullName evidence="2">Adenine phosphoribosyltransferase</fullName>
        <shortName>APRT</shortName>
        <ecNumber evidence="2">2.4.2.7</ecNumber>
    </recommendedName>
</protein>
<reference key="1">
    <citation type="submission" date="2005-01" db="EMBL/GenBank/DDBJ databases">
        <title>Analysis of sequences obtained from constructed full-length bovine cDNA libraries.</title>
        <authorList>
            <person name="Yu J."/>
            <person name="Meng Y."/>
            <person name="Wang Z."/>
            <person name="Hansen C."/>
            <person name="Li C."/>
            <person name="Moore S.S."/>
        </authorList>
    </citation>
    <scope>NUCLEOTIDE SEQUENCE [LARGE SCALE MRNA]</scope>
    <source>
        <tissue>Lymphoid epithelium</tissue>
    </source>
</reference>
<reference key="2">
    <citation type="submission" date="2005-08" db="EMBL/GenBank/DDBJ databases">
        <authorList>
            <consortium name="NIH - Mammalian Gene Collection (MGC) project"/>
        </authorList>
    </citation>
    <scope>NUCLEOTIDE SEQUENCE [LARGE SCALE MRNA]</scope>
    <source>
        <strain>Crossbred X Angus</strain>
        <tissue>Ileum</tissue>
    </source>
</reference>
<comment type="function">
    <text evidence="2">Catalyzes a salvage reaction resulting in the formation of AMP, that is energically less costly than de novo synthesis.</text>
</comment>
<comment type="catalytic activity">
    <reaction evidence="2">
        <text>AMP + diphosphate = 5-phospho-alpha-D-ribose 1-diphosphate + adenine</text>
        <dbReference type="Rhea" id="RHEA:16609"/>
        <dbReference type="ChEBI" id="CHEBI:16708"/>
        <dbReference type="ChEBI" id="CHEBI:33019"/>
        <dbReference type="ChEBI" id="CHEBI:58017"/>
        <dbReference type="ChEBI" id="CHEBI:456215"/>
        <dbReference type="EC" id="2.4.2.7"/>
    </reaction>
</comment>
<comment type="pathway">
    <text evidence="2">Purine metabolism; AMP biosynthesis via salvage pathway; AMP from adenine: step 1/1.</text>
</comment>
<comment type="subunit">
    <text evidence="1">Homodimer.</text>
</comment>
<comment type="subcellular location">
    <subcellularLocation>
        <location evidence="1">Cytoplasm</location>
    </subcellularLocation>
</comment>
<comment type="similarity">
    <text evidence="3">Belongs to the purine/pyrimidine phosphoribosyltransferase family.</text>
</comment>
<proteinExistence type="evidence at transcript level"/>